<accession>A8GWC2</accession>
<dbReference type="EMBL" id="CP000849">
    <property type="protein sequence ID" value="ABV79149.1"/>
    <property type="molecule type" value="Genomic_DNA"/>
</dbReference>
<dbReference type="RefSeq" id="WP_012151865.1">
    <property type="nucleotide sequence ID" value="NC_009883.1"/>
</dbReference>
<dbReference type="SMR" id="A8GWC2"/>
<dbReference type="KEGG" id="rbo:A1I_03980"/>
<dbReference type="HOGENOM" id="CLU_087936_3_0_5"/>
<dbReference type="GO" id="GO:0005737">
    <property type="term" value="C:cytoplasm"/>
    <property type="evidence" value="ECO:0007669"/>
    <property type="project" value="UniProtKB-SubCell"/>
</dbReference>
<dbReference type="GO" id="GO:0009379">
    <property type="term" value="C:Holliday junction helicase complex"/>
    <property type="evidence" value="ECO:0007669"/>
    <property type="project" value="InterPro"/>
</dbReference>
<dbReference type="GO" id="GO:0048476">
    <property type="term" value="C:Holliday junction resolvase complex"/>
    <property type="evidence" value="ECO:0007669"/>
    <property type="project" value="UniProtKB-UniRule"/>
</dbReference>
<dbReference type="GO" id="GO:0005524">
    <property type="term" value="F:ATP binding"/>
    <property type="evidence" value="ECO:0007669"/>
    <property type="project" value="InterPro"/>
</dbReference>
<dbReference type="GO" id="GO:0000400">
    <property type="term" value="F:four-way junction DNA binding"/>
    <property type="evidence" value="ECO:0007669"/>
    <property type="project" value="UniProtKB-UniRule"/>
</dbReference>
<dbReference type="GO" id="GO:0009378">
    <property type="term" value="F:four-way junction helicase activity"/>
    <property type="evidence" value="ECO:0007669"/>
    <property type="project" value="InterPro"/>
</dbReference>
<dbReference type="GO" id="GO:0006310">
    <property type="term" value="P:DNA recombination"/>
    <property type="evidence" value="ECO:0007669"/>
    <property type="project" value="UniProtKB-UniRule"/>
</dbReference>
<dbReference type="GO" id="GO:0006281">
    <property type="term" value="P:DNA repair"/>
    <property type="evidence" value="ECO:0007669"/>
    <property type="project" value="UniProtKB-UniRule"/>
</dbReference>
<dbReference type="CDD" id="cd14332">
    <property type="entry name" value="UBA_RuvA_C"/>
    <property type="match status" value="1"/>
</dbReference>
<dbReference type="Gene3D" id="1.10.150.20">
    <property type="entry name" value="5' to 3' exonuclease, C-terminal subdomain"/>
    <property type="match status" value="1"/>
</dbReference>
<dbReference type="Gene3D" id="1.10.8.10">
    <property type="entry name" value="DNA helicase RuvA subunit, C-terminal domain"/>
    <property type="match status" value="1"/>
</dbReference>
<dbReference type="Gene3D" id="2.40.50.140">
    <property type="entry name" value="Nucleic acid-binding proteins"/>
    <property type="match status" value="1"/>
</dbReference>
<dbReference type="HAMAP" id="MF_00031">
    <property type="entry name" value="DNA_HJ_migration_RuvA"/>
    <property type="match status" value="1"/>
</dbReference>
<dbReference type="InterPro" id="IPR013849">
    <property type="entry name" value="DNA_helicase_Holl-junc_RuvA_I"/>
</dbReference>
<dbReference type="InterPro" id="IPR003583">
    <property type="entry name" value="Hlx-hairpin-Hlx_DNA-bd_motif"/>
</dbReference>
<dbReference type="InterPro" id="IPR012340">
    <property type="entry name" value="NA-bd_OB-fold"/>
</dbReference>
<dbReference type="InterPro" id="IPR000085">
    <property type="entry name" value="RuvA"/>
</dbReference>
<dbReference type="InterPro" id="IPR010994">
    <property type="entry name" value="RuvA_2-like"/>
</dbReference>
<dbReference type="InterPro" id="IPR011114">
    <property type="entry name" value="RuvA_C"/>
</dbReference>
<dbReference type="InterPro" id="IPR036267">
    <property type="entry name" value="RuvA_C_sf"/>
</dbReference>
<dbReference type="NCBIfam" id="TIGR00084">
    <property type="entry name" value="ruvA"/>
    <property type="match status" value="1"/>
</dbReference>
<dbReference type="Pfam" id="PF14520">
    <property type="entry name" value="HHH_5"/>
    <property type="match status" value="1"/>
</dbReference>
<dbReference type="Pfam" id="PF07499">
    <property type="entry name" value="RuvA_C"/>
    <property type="match status" value="1"/>
</dbReference>
<dbReference type="Pfam" id="PF01330">
    <property type="entry name" value="RuvA_N"/>
    <property type="match status" value="1"/>
</dbReference>
<dbReference type="SMART" id="SM00278">
    <property type="entry name" value="HhH1"/>
    <property type="match status" value="2"/>
</dbReference>
<dbReference type="SUPFAM" id="SSF46929">
    <property type="entry name" value="DNA helicase RuvA subunit, C-terminal domain"/>
    <property type="match status" value="1"/>
</dbReference>
<dbReference type="SUPFAM" id="SSF50249">
    <property type="entry name" value="Nucleic acid-binding proteins"/>
    <property type="match status" value="1"/>
</dbReference>
<dbReference type="SUPFAM" id="SSF47781">
    <property type="entry name" value="RuvA domain 2-like"/>
    <property type="match status" value="1"/>
</dbReference>
<proteinExistence type="inferred from homology"/>
<organism>
    <name type="scientific">Rickettsia bellii (strain OSU 85-389)</name>
    <dbReference type="NCBI Taxonomy" id="391896"/>
    <lineage>
        <taxon>Bacteria</taxon>
        <taxon>Pseudomonadati</taxon>
        <taxon>Pseudomonadota</taxon>
        <taxon>Alphaproteobacteria</taxon>
        <taxon>Rickettsiales</taxon>
        <taxon>Rickettsiaceae</taxon>
        <taxon>Rickettsieae</taxon>
        <taxon>Rickettsia</taxon>
        <taxon>belli group</taxon>
    </lineage>
</organism>
<keyword id="KW-0963">Cytoplasm</keyword>
<keyword id="KW-0227">DNA damage</keyword>
<keyword id="KW-0233">DNA recombination</keyword>
<keyword id="KW-0234">DNA repair</keyword>
<keyword id="KW-0238">DNA-binding</keyword>
<gene>
    <name evidence="1" type="primary">ruvA</name>
    <name type="ordered locus">A1I_03980</name>
</gene>
<evidence type="ECO:0000255" key="1">
    <source>
        <dbReference type="HAMAP-Rule" id="MF_00031"/>
    </source>
</evidence>
<comment type="function">
    <text evidence="1">The RuvA-RuvB-RuvC complex processes Holliday junction (HJ) DNA during genetic recombination and DNA repair, while the RuvA-RuvB complex plays an important role in the rescue of blocked DNA replication forks via replication fork reversal (RFR). RuvA specifically binds to HJ cruciform DNA, conferring on it an open structure. The RuvB hexamer acts as an ATP-dependent pump, pulling dsDNA into and through the RuvAB complex. HJ branch migration allows RuvC to scan DNA until it finds its consensus sequence, where it cleaves and resolves the cruciform DNA.</text>
</comment>
<comment type="subunit">
    <text evidence="1">Homotetramer. Forms an RuvA(8)-RuvB(12)-Holliday junction (HJ) complex. HJ DNA is sandwiched between 2 RuvA tetramers; dsDNA enters through RuvA and exits via RuvB. An RuvB hexamer assembles on each DNA strand where it exits the tetramer. Each RuvB hexamer is contacted by two RuvA subunits (via domain III) on 2 adjacent RuvB subunits; this complex drives branch migration. In the full resolvosome a probable DNA-RuvA(4)-RuvB(12)-RuvC(2) complex forms which resolves the HJ.</text>
</comment>
<comment type="subcellular location">
    <subcellularLocation>
        <location evidence="1">Cytoplasm</location>
    </subcellularLocation>
</comment>
<comment type="domain">
    <text evidence="1">Has three domains with a flexible linker between the domains II and III and assumes an 'L' shape. Domain III is highly mobile and contacts RuvB.</text>
</comment>
<comment type="similarity">
    <text evidence="1">Belongs to the RuvA family.</text>
</comment>
<reference key="1">
    <citation type="submission" date="2007-09" db="EMBL/GenBank/DDBJ databases">
        <title>Complete genome sequencing of Rickettsia bellii.</title>
        <authorList>
            <person name="Madan A."/>
            <person name="Lee H."/>
            <person name="Madan A."/>
            <person name="Yoon J.-G."/>
            <person name="Ryu G.-Y."/>
            <person name="Dasch G."/>
            <person name="Ereemeva M."/>
        </authorList>
    </citation>
    <scope>NUCLEOTIDE SEQUENCE [LARGE SCALE GENOMIC DNA]</scope>
    <source>
        <strain>OSU 85-389</strain>
    </source>
</reference>
<feature type="chain" id="PRO_1000002536" description="Holliday junction branch migration complex subunit RuvA">
    <location>
        <begin position="1"/>
        <end position="203"/>
    </location>
</feature>
<feature type="region of interest" description="Domain I" evidence="1">
    <location>
        <begin position="1"/>
        <end position="63"/>
    </location>
</feature>
<feature type="region of interest" description="Domain II" evidence="1">
    <location>
        <begin position="64"/>
        <end position="142"/>
    </location>
</feature>
<feature type="region of interest" description="Flexible linker" evidence="1">
    <location>
        <begin position="143"/>
        <end position="149"/>
    </location>
</feature>
<feature type="region of interest" description="Domain III" evidence="1">
    <location>
        <begin position="150"/>
        <end position="203"/>
    </location>
</feature>
<protein>
    <recommendedName>
        <fullName evidence="1">Holliday junction branch migration complex subunit RuvA</fullName>
    </recommendedName>
</protein>
<name>RUVA_RICB8</name>
<sequence length="203" mass="22249">MIGKLSGRVDSSYDDYVIIDVSGVGYRVFASAKTLSKLSEGESYKLFIETHVREDHINLYGFLSLEEKSFFNLLQSVNGIGTRMALSILSALTPTDIQIAINNEDKNIFKAISGVGAKLAERIVRELSDKVAKISSSSAAIKDSLNIKGITPVASSEVIKALINMGFSRFEAQNAVQEIITKNPEISIDELIRTALKNRNSNF</sequence>